<gene>
    <name type="primary">CXorf65</name>
</gene>
<keyword id="KW-1267">Proteomics identification</keyword>
<keyword id="KW-1185">Reference proteome</keyword>
<feature type="chain" id="PRO_0000346434" description="Uncharacterized protein CXorf65">
    <location>
        <begin position="1"/>
        <end position="183"/>
    </location>
</feature>
<feature type="region of interest" description="Disordered" evidence="1">
    <location>
        <begin position="136"/>
        <end position="183"/>
    </location>
</feature>
<feature type="compositionally biased region" description="Basic residues" evidence="1">
    <location>
        <begin position="170"/>
        <end position="183"/>
    </location>
</feature>
<feature type="sequence variant" id="VAR_045896" description="In dbSNP:rs12009522.">
    <original>R</original>
    <variation>H</variation>
    <location>
        <position position="156"/>
    </location>
</feature>
<sequence length="183" mass="21305">MFIFIKHGDNQQFLVNTNCAVVVLLYYIRSKVKLPKTNTIDLCEQTGKMKMLFLMKPNHAEYASKYLTARSTYYVCKVERGPPGTRLENAYRAFVPLLKNPEPWLLVALRIQCDALERRRIQMLKMKEAKKVVIIEPPASVPSKQSGRSDKKKSTRKSPTFRNRPDFRKNKGRQLNKTTKQKK</sequence>
<proteinExistence type="evidence at protein level"/>
<evidence type="ECO:0000256" key="1">
    <source>
        <dbReference type="SAM" id="MobiDB-lite"/>
    </source>
</evidence>
<protein>
    <recommendedName>
        <fullName>Uncharacterized protein CXorf65</fullName>
    </recommendedName>
</protein>
<dbReference type="EMBL" id="AL590764">
    <property type="status" value="NOT_ANNOTATED_CDS"/>
    <property type="molecule type" value="Genomic_DNA"/>
</dbReference>
<dbReference type="EMBL" id="CH471132">
    <property type="protein sequence ID" value="EAX05320.1"/>
    <property type="molecule type" value="Genomic_DNA"/>
</dbReference>
<dbReference type="CCDS" id="CCDS35324.1"/>
<dbReference type="RefSeq" id="NP_001020436.1">
    <property type="nucleotide sequence ID" value="NM_001025265.3"/>
</dbReference>
<dbReference type="BioGRID" id="127714">
    <property type="interactions" value="4"/>
</dbReference>
<dbReference type="STRING" id="9606.ENSP00000363369"/>
<dbReference type="iPTMnet" id="A6NEN9"/>
<dbReference type="PhosphoSitePlus" id="A6NEN9"/>
<dbReference type="BioMuta" id="CXorf65"/>
<dbReference type="jPOST" id="A6NEN9"/>
<dbReference type="MassIVE" id="A6NEN9"/>
<dbReference type="PaxDb" id="9606-ENSP00000363369"/>
<dbReference type="PeptideAtlas" id="A6NEN9"/>
<dbReference type="ProteomicsDB" id="997"/>
<dbReference type="Antibodypedia" id="67487">
    <property type="antibodies" value="4 antibodies from 4 providers"/>
</dbReference>
<dbReference type="DNASU" id="158830"/>
<dbReference type="Ensembl" id="ENST00000374251.6">
    <property type="protein sequence ID" value="ENSP00000363369.4"/>
    <property type="gene ID" value="ENSG00000204165.6"/>
</dbReference>
<dbReference type="GeneID" id="158830"/>
<dbReference type="KEGG" id="hsa:158830"/>
<dbReference type="MANE-Select" id="ENST00000374251.6">
    <property type="protein sequence ID" value="ENSP00000363369.4"/>
    <property type="RefSeq nucleotide sequence ID" value="NM_001025265.3"/>
    <property type="RefSeq protein sequence ID" value="NP_001020436.1"/>
</dbReference>
<dbReference type="UCSC" id="uc011mpo.3">
    <property type="organism name" value="human"/>
</dbReference>
<dbReference type="AGR" id="HGNC:33713"/>
<dbReference type="CTD" id="158830"/>
<dbReference type="DisGeNET" id="158830"/>
<dbReference type="GeneCards" id="CXorf65"/>
<dbReference type="HGNC" id="HGNC:33713">
    <property type="gene designation" value="CXorf65"/>
</dbReference>
<dbReference type="HPA" id="ENSG00000204165">
    <property type="expression patterns" value="Tissue enriched (testis)"/>
</dbReference>
<dbReference type="MalaCards" id="CXorf65"/>
<dbReference type="neXtProt" id="NX_A6NEN9"/>
<dbReference type="OpenTargets" id="ENSG00000204165"/>
<dbReference type="PharmGKB" id="PA164718500"/>
<dbReference type="VEuPathDB" id="HostDB:ENSG00000204165"/>
<dbReference type="eggNOG" id="ENOG502S153">
    <property type="taxonomic scope" value="Eukaryota"/>
</dbReference>
<dbReference type="GeneTree" id="ENSGT00510000049291"/>
<dbReference type="HOGENOM" id="CLU_126634_0_0_1"/>
<dbReference type="InParanoid" id="A6NEN9"/>
<dbReference type="OMA" id="RVKMLRI"/>
<dbReference type="OrthoDB" id="2109241at2759"/>
<dbReference type="PAN-GO" id="A6NEN9">
    <property type="GO annotations" value="0 GO annotations based on evolutionary models"/>
</dbReference>
<dbReference type="PhylomeDB" id="A6NEN9"/>
<dbReference type="TreeFam" id="TF328811"/>
<dbReference type="PathwayCommons" id="A6NEN9"/>
<dbReference type="SignaLink" id="A6NEN9"/>
<dbReference type="BioGRID-ORCS" id="158830">
    <property type="hits" value="7 hits in 763 CRISPR screens"/>
</dbReference>
<dbReference type="ChiTaRS" id="CXorf65">
    <property type="organism name" value="human"/>
</dbReference>
<dbReference type="GenomeRNAi" id="158830"/>
<dbReference type="Pharos" id="A6NEN9">
    <property type="development level" value="Tdark"/>
</dbReference>
<dbReference type="PRO" id="PR:A6NEN9"/>
<dbReference type="Proteomes" id="UP000005640">
    <property type="component" value="Chromosome X"/>
</dbReference>
<dbReference type="RNAct" id="A6NEN9">
    <property type="molecule type" value="protein"/>
</dbReference>
<dbReference type="Bgee" id="ENSG00000204165">
    <property type="expression patterns" value="Expressed in granulocyte and 87 other cell types or tissues"/>
</dbReference>
<dbReference type="ExpressionAtlas" id="A6NEN9">
    <property type="expression patterns" value="baseline and differential"/>
</dbReference>
<dbReference type="GO" id="GO:0000978">
    <property type="term" value="F:RNA polymerase II cis-regulatory region sequence-specific DNA binding"/>
    <property type="evidence" value="ECO:0007669"/>
    <property type="project" value="Ensembl"/>
</dbReference>
<dbReference type="GO" id="GO:0006366">
    <property type="term" value="P:transcription by RNA polymerase II"/>
    <property type="evidence" value="ECO:0007669"/>
    <property type="project" value="Ensembl"/>
</dbReference>
<dbReference type="InterPro" id="IPR039471">
    <property type="entry name" value="CXorf65-like"/>
</dbReference>
<dbReference type="PANTHER" id="PTHR33887:SF4">
    <property type="entry name" value="AB2-183"/>
    <property type="match status" value="1"/>
</dbReference>
<dbReference type="PANTHER" id="PTHR33887">
    <property type="entry name" value="PB1 DOMAIN-CONTAINING PROTEIN"/>
    <property type="match status" value="1"/>
</dbReference>
<dbReference type="Pfam" id="PF15874">
    <property type="entry name" value="Il2rg"/>
    <property type="match status" value="1"/>
</dbReference>
<name>CX065_HUMAN</name>
<accession>A6NEN9</accession>
<reference key="1">
    <citation type="journal article" date="2005" name="Nature">
        <title>The DNA sequence of the human X chromosome.</title>
        <authorList>
            <person name="Ross M.T."/>
            <person name="Grafham D.V."/>
            <person name="Coffey A.J."/>
            <person name="Scherer S."/>
            <person name="McLay K."/>
            <person name="Muzny D."/>
            <person name="Platzer M."/>
            <person name="Howell G.R."/>
            <person name="Burrows C."/>
            <person name="Bird C.P."/>
            <person name="Frankish A."/>
            <person name="Lovell F.L."/>
            <person name="Howe K.L."/>
            <person name="Ashurst J.L."/>
            <person name="Fulton R.S."/>
            <person name="Sudbrak R."/>
            <person name="Wen G."/>
            <person name="Jones M.C."/>
            <person name="Hurles M.E."/>
            <person name="Andrews T.D."/>
            <person name="Scott C.E."/>
            <person name="Searle S."/>
            <person name="Ramser J."/>
            <person name="Whittaker A."/>
            <person name="Deadman R."/>
            <person name="Carter N.P."/>
            <person name="Hunt S.E."/>
            <person name="Chen R."/>
            <person name="Cree A."/>
            <person name="Gunaratne P."/>
            <person name="Havlak P."/>
            <person name="Hodgson A."/>
            <person name="Metzker M.L."/>
            <person name="Richards S."/>
            <person name="Scott G."/>
            <person name="Steffen D."/>
            <person name="Sodergren E."/>
            <person name="Wheeler D.A."/>
            <person name="Worley K.C."/>
            <person name="Ainscough R."/>
            <person name="Ambrose K.D."/>
            <person name="Ansari-Lari M.A."/>
            <person name="Aradhya S."/>
            <person name="Ashwell R.I."/>
            <person name="Babbage A.K."/>
            <person name="Bagguley C.L."/>
            <person name="Ballabio A."/>
            <person name="Banerjee R."/>
            <person name="Barker G.E."/>
            <person name="Barlow K.F."/>
            <person name="Barrett I.P."/>
            <person name="Bates K.N."/>
            <person name="Beare D.M."/>
            <person name="Beasley H."/>
            <person name="Beasley O."/>
            <person name="Beck A."/>
            <person name="Bethel G."/>
            <person name="Blechschmidt K."/>
            <person name="Brady N."/>
            <person name="Bray-Allen S."/>
            <person name="Bridgeman A.M."/>
            <person name="Brown A.J."/>
            <person name="Brown M.J."/>
            <person name="Bonnin D."/>
            <person name="Bruford E.A."/>
            <person name="Buhay C."/>
            <person name="Burch P."/>
            <person name="Burford D."/>
            <person name="Burgess J."/>
            <person name="Burrill W."/>
            <person name="Burton J."/>
            <person name="Bye J.M."/>
            <person name="Carder C."/>
            <person name="Carrel L."/>
            <person name="Chako J."/>
            <person name="Chapman J.C."/>
            <person name="Chavez D."/>
            <person name="Chen E."/>
            <person name="Chen G."/>
            <person name="Chen Y."/>
            <person name="Chen Z."/>
            <person name="Chinault C."/>
            <person name="Ciccodicola A."/>
            <person name="Clark S.Y."/>
            <person name="Clarke G."/>
            <person name="Clee C.M."/>
            <person name="Clegg S."/>
            <person name="Clerc-Blankenburg K."/>
            <person name="Clifford K."/>
            <person name="Cobley V."/>
            <person name="Cole C.G."/>
            <person name="Conquer J.S."/>
            <person name="Corby N."/>
            <person name="Connor R.E."/>
            <person name="David R."/>
            <person name="Davies J."/>
            <person name="Davis C."/>
            <person name="Davis J."/>
            <person name="Delgado O."/>
            <person name="Deshazo D."/>
            <person name="Dhami P."/>
            <person name="Ding Y."/>
            <person name="Dinh H."/>
            <person name="Dodsworth S."/>
            <person name="Draper H."/>
            <person name="Dugan-Rocha S."/>
            <person name="Dunham A."/>
            <person name="Dunn M."/>
            <person name="Durbin K.J."/>
            <person name="Dutta I."/>
            <person name="Eades T."/>
            <person name="Ellwood M."/>
            <person name="Emery-Cohen A."/>
            <person name="Errington H."/>
            <person name="Evans K.L."/>
            <person name="Faulkner L."/>
            <person name="Francis F."/>
            <person name="Frankland J."/>
            <person name="Fraser A.E."/>
            <person name="Galgoczy P."/>
            <person name="Gilbert J."/>
            <person name="Gill R."/>
            <person name="Gloeckner G."/>
            <person name="Gregory S.G."/>
            <person name="Gribble S."/>
            <person name="Griffiths C."/>
            <person name="Grocock R."/>
            <person name="Gu Y."/>
            <person name="Gwilliam R."/>
            <person name="Hamilton C."/>
            <person name="Hart E.A."/>
            <person name="Hawes A."/>
            <person name="Heath P.D."/>
            <person name="Heitmann K."/>
            <person name="Hennig S."/>
            <person name="Hernandez J."/>
            <person name="Hinzmann B."/>
            <person name="Ho S."/>
            <person name="Hoffs M."/>
            <person name="Howden P.J."/>
            <person name="Huckle E.J."/>
            <person name="Hume J."/>
            <person name="Hunt P.J."/>
            <person name="Hunt A.R."/>
            <person name="Isherwood J."/>
            <person name="Jacob L."/>
            <person name="Johnson D."/>
            <person name="Jones S."/>
            <person name="de Jong P.J."/>
            <person name="Joseph S.S."/>
            <person name="Keenan S."/>
            <person name="Kelly S."/>
            <person name="Kershaw J.K."/>
            <person name="Khan Z."/>
            <person name="Kioschis P."/>
            <person name="Klages S."/>
            <person name="Knights A.J."/>
            <person name="Kosiura A."/>
            <person name="Kovar-Smith C."/>
            <person name="Laird G.K."/>
            <person name="Langford C."/>
            <person name="Lawlor S."/>
            <person name="Leversha M."/>
            <person name="Lewis L."/>
            <person name="Liu W."/>
            <person name="Lloyd C."/>
            <person name="Lloyd D.M."/>
            <person name="Loulseged H."/>
            <person name="Loveland J.E."/>
            <person name="Lovell J.D."/>
            <person name="Lozado R."/>
            <person name="Lu J."/>
            <person name="Lyne R."/>
            <person name="Ma J."/>
            <person name="Maheshwari M."/>
            <person name="Matthews L.H."/>
            <person name="McDowall J."/>
            <person name="McLaren S."/>
            <person name="McMurray A."/>
            <person name="Meidl P."/>
            <person name="Meitinger T."/>
            <person name="Milne S."/>
            <person name="Miner G."/>
            <person name="Mistry S.L."/>
            <person name="Morgan M."/>
            <person name="Morris S."/>
            <person name="Mueller I."/>
            <person name="Mullikin J.C."/>
            <person name="Nguyen N."/>
            <person name="Nordsiek G."/>
            <person name="Nyakatura G."/>
            <person name="O'dell C.N."/>
            <person name="Okwuonu G."/>
            <person name="Palmer S."/>
            <person name="Pandian R."/>
            <person name="Parker D."/>
            <person name="Parrish J."/>
            <person name="Pasternak S."/>
            <person name="Patel D."/>
            <person name="Pearce A.V."/>
            <person name="Pearson D.M."/>
            <person name="Pelan S.E."/>
            <person name="Perez L."/>
            <person name="Porter K.M."/>
            <person name="Ramsey Y."/>
            <person name="Reichwald K."/>
            <person name="Rhodes S."/>
            <person name="Ridler K.A."/>
            <person name="Schlessinger D."/>
            <person name="Schueler M.G."/>
            <person name="Sehra H.K."/>
            <person name="Shaw-Smith C."/>
            <person name="Shen H."/>
            <person name="Sheridan E.M."/>
            <person name="Shownkeen R."/>
            <person name="Skuce C.D."/>
            <person name="Smith M.L."/>
            <person name="Sotheran E.C."/>
            <person name="Steingruber H.E."/>
            <person name="Steward C.A."/>
            <person name="Storey R."/>
            <person name="Swann R.M."/>
            <person name="Swarbreck D."/>
            <person name="Tabor P.E."/>
            <person name="Taudien S."/>
            <person name="Taylor T."/>
            <person name="Teague B."/>
            <person name="Thomas K."/>
            <person name="Thorpe A."/>
            <person name="Timms K."/>
            <person name="Tracey A."/>
            <person name="Trevanion S."/>
            <person name="Tromans A.C."/>
            <person name="d'Urso M."/>
            <person name="Verduzco D."/>
            <person name="Villasana D."/>
            <person name="Waldron L."/>
            <person name="Wall M."/>
            <person name="Wang Q."/>
            <person name="Warren J."/>
            <person name="Warry G.L."/>
            <person name="Wei X."/>
            <person name="West A."/>
            <person name="Whitehead S.L."/>
            <person name="Whiteley M.N."/>
            <person name="Wilkinson J.E."/>
            <person name="Willey D.L."/>
            <person name="Williams G."/>
            <person name="Williams L."/>
            <person name="Williamson A."/>
            <person name="Williamson H."/>
            <person name="Wilming L."/>
            <person name="Woodmansey R.L."/>
            <person name="Wray P.W."/>
            <person name="Yen J."/>
            <person name="Zhang J."/>
            <person name="Zhou J."/>
            <person name="Zoghbi H."/>
            <person name="Zorilla S."/>
            <person name="Buck D."/>
            <person name="Reinhardt R."/>
            <person name="Poustka A."/>
            <person name="Rosenthal A."/>
            <person name="Lehrach H."/>
            <person name="Meindl A."/>
            <person name="Minx P.J."/>
            <person name="Hillier L.W."/>
            <person name="Willard H.F."/>
            <person name="Wilson R.K."/>
            <person name="Waterston R.H."/>
            <person name="Rice C.M."/>
            <person name="Vaudin M."/>
            <person name="Coulson A."/>
            <person name="Nelson D.L."/>
            <person name="Weinstock G."/>
            <person name="Sulston J.E."/>
            <person name="Durbin R.M."/>
            <person name="Hubbard T."/>
            <person name="Gibbs R.A."/>
            <person name="Beck S."/>
            <person name="Rogers J."/>
            <person name="Bentley D.R."/>
        </authorList>
    </citation>
    <scope>NUCLEOTIDE SEQUENCE [LARGE SCALE GENOMIC DNA]</scope>
</reference>
<reference key="2">
    <citation type="submission" date="2005-09" db="EMBL/GenBank/DDBJ databases">
        <authorList>
            <person name="Mural R.J."/>
            <person name="Istrail S."/>
            <person name="Sutton G.G."/>
            <person name="Florea L."/>
            <person name="Halpern A.L."/>
            <person name="Mobarry C.M."/>
            <person name="Lippert R."/>
            <person name="Walenz B."/>
            <person name="Shatkay H."/>
            <person name="Dew I."/>
            <person name="Miller J.R."/>
            <person name="Flanigan M.J."/>
            <person name="Edwards N.J."/>
            <person name="Bolanos R."/>
            <person name="Fasulo D."/>
            <person name="Halldorsson B.V."/>
            <person name="Hannenhalli S."/>
            <person name="Turner R."/>
            <person name="Yooseph S."/>
            <person name="Lu F."/>
            <person name="Nusskern D.R."/>
            <person name="Shue B.C."/>
            <person name="Zheng X.H."/>
            <person name="Zhong F."/>
            <person name="Delcher A.L."/>
            <person name="Huson D.H."/>
            <person name="Kravitz S.A."/>
            <person name="Mouchard L."/>
            <person name="Reinert K."/>
            <person name="Remington K.A."/>
            <person name="Clark A.G."/>
            <person name="Waterman M.S."/>
            <person name="Eichler E.E."/>
            <person name="Adams M.D."/>
            <person name="Hunkapiller M.W."/>
            <person name="Myers E.W."/>
            <person name="Venter J.C."/>
        </authorList>
    </citation>
    <scope>NUCLEOTIDE SEQUENCE [LARGE SCALE GENOMIC DNA]</scope>
</reference>
<organism>
    <name type="scientific">Homo sapiens</name>
    <name type="common">Human</name>
    <dbReference type="NCBI Taxonomy" id="9606"/>
    <lineage>
        <taxon>Eukaryota</taxon>
        <taxon>Metazoa</taxon>
        <taxon>Chordata</taxon>
        <taxon>Craniata</taxon>
        <taxon>Vertebrata</taxon>
        <taxon>Euteleostomi</taxon>
        <taxon>Mammalia</taxon>
        <taxon>Eutheria</taxon>
        <taxon>Euarchontoglires</taxon>
        <taxon>Primates</taxon>
        <taxon>Haplorrhini</taxon>
        <taxon>Catarrhini</taxon>
        <taxon>Hominidae</taxon>
        <taxon>Homo</taxon>
    </lineage>
</organism>